<proteinExistence type="inferred from homology"/>
<comment type="function">
    <text evidence="1">Located at the top of the head of the 30S subunit, it contacts several helices of the 16S rRNA. In the 70S ribosome it contacts the 23S rRNA (bridge B1a) and protein L5 of the 50S subunit (bridge B1b), connecting the 2 subunits; these bridges are implicated in subunit movement.</text>
</comment>
<comment type="subunit">
    <text evidence="1">Part of the 30S ribosomal subunit. Forms a loose heterodimer with protein S19. Forms two bridges to the 50S subunit in the 70S ribosome.</text>
</comment>
<comment type="similarity">
    <text evidence="1">Belongs to the universal ribosomal protein uS13 family.</text>
</comment>
<gene>
    <name evidence="1" type="primary">rps13</name>
    <name type="ordered locus">NEQ467</name>
</gene>
<evidence type="ECO:0000255" key="1">
    <source>
        <dbReference type="HAMAP-Rule" id="MF_01315"/>
    </source>
</evidence>
<evidence type="ECO:0000256" key="2">
    <source>
        <dbReference type="SAM" id="MobiDB-lite"/>
    </source>
</evidence>
<evidence type="ECO:0000305" key="3"/>
<keyword id="KW-1185">Reference proteome</keyword>
<keyword id="KW-0687">Ribonucleoprotein</keyword>
<keyword id="KW-0689">Ribosomal protein</keyword>
<keyword id="KW-0694">RNA-binding</keyword>
<keyword id="KW-0699">rRNA-binding</keyword>
<reference key="1">
    <citation type="journal article" date="2003" name="Proc. Natl. Acad. Sci. U.S.A.">
        <title>The genome of Nanoarchaeum equitans: insights into early archaeal evolution and derived parasitism.</title>
        <authorList>
            <person name="Waters E."/>
            <person name="Hohn M.J."/>
            <person name="Ahel I."/>
            <person name="Graham D.E."/>
            <person name="Adams M.D."/>
            <person name="Barnstead M."/>
            <person name="Beeson K.Y."/>
            <person name="Bibbs L."/>
            <person name="Bolanos R."/>
            <person name="Keller M."/>
            <person name="Kretz K."/>
            <person name="Lin X."/>
            <person name="Mathur E."/>
            <person name="Ni J."/>
            <person name="Podar M."/>
            <person name="Richardson T."/>
            <person name="Sutton G.G."/>
            <person name="Simon M."/>
            <person name="Soell D."/>
            <person name="Stetter K.O."/>
            <person name="Short J.M."/>
            <person name="Noorderwier M."/>
        </authorList>
    </citation>
    <scope>NUCLEOTIDE SEQUENCE [LARGE SCALE GENOMIC DNA]</scope>
    <source>
        <strain>Kin4-M</strain>
    </source>
</reference>
<dbReference type="EMBL" id="AE017199">
    <property type="protein sequence ID" value="AAR39310.1"/>
    <property type="molecule type" value="Genomic_DNA"/>
</dbReference>
<dbReference type="SMR" id="Q74M95"/>
<dbReference type="STRING" id="228908.NEQ467"/>
<dbReference type="EnsemblBacteria" id="AAR39310">
    <property type="protein sequence ID" value="AAR39310"/>
    <property type="gene ID" value="NEQ467"/>
</dbReference>
<dbReference type="KEGG" id="neq:NEQ467"/>
<dbReference type="PATRIC" id="fig|228908.8.peg.481"/>
<dbReference type="HOGENOM" id="CLU_103849_0_0_2"/>
<dbReference type="Proteomes" id="UP000000578">
    <property type="component" value="Chromosome"/>
</dbReference>
<dbReference type="GO" id="GO:0005829">
    <property type="term" value="C:cytosol"/>
    <property type="evidence" value="ECO:0007669"/>
    <property type="project" value="TreeGrafter"/>
</dbReference>
<dbReference type="GO" id="GO:0015935">
    <property type="term" value="C:small ribosomal subunit"/>
    <property type="evidence" value="ECO:0007669"/>
    <property type="project" value="TreeGrafter"/>
</dbReference>
<dbReference type="GO" id="GO:0019843">
    <property type="term" value="F:rRNA binding"/>
    <property type="evidence" value="ECO:0007669"/>
    <property type="project" value="UniProtKB-UniRule"/>
</dbReference>
<dbReference type="GO" id="GO:0003735">
    <property type="term" value="F:structural constituent of ribosome"/>
    <property type="evidence" value="ECO:0007669"/>
    <property type="project" value="InterPro"/>
</dbReference>
<dbReference type="GO" id="GO:0006412">
    <property type="term" value="P:translation"/>
    <property type="evidence" value="ECO:0007669"/>
    <property type="project" value="UniProtKB-UniRule"/>
</dbReference>
<dbReference type="Gene3D" id="1.10.8.50">
    <property type="match status" value="1"/>
</dbReference>
<dbReference type="Gene3D" id="4.10.910.10">
    <property type="entry name" value="30s ribosomal protein s13, domain 2"/>
    <property type="match status" value="1"/>
</dbReference>
<dbReference type="HAMAP" id="MF_01315">
    <property type="entry name" value="Ribosomal_uS13"/>
    <property type="match status" value="1"/>
</dbReference>
<dbReference type="InterPro" id="IPR027437">
    <property type="entry name" value="Rbsml_uS13_C"/>
</dbReference>
<dbReference type="InterPro" id="IPR001892">
    <property type="entry name" value="Ribosomal_uS13"/>
</dbReference>
<dbReference type="InterPro" id="IPR010979">
    <property type="entry name" value="Ribosomal_uS13-like_H2TH"/>
</dbReference>
<dbReference type="InterPro" id="IPR019977">
    <property type="entry name" value="Ribosomal_uS13_archaeal"/>
</dbReference>
<dbReference type="InterPro" id="IPR018269">
    <property type="entry name" value="Ribosomal_uS13_CS"/>
</dbReference>
<dbReference type="NCBIfam" id="NF003140">
    <property type="entry name" value="PRK04053.1"/>
    <property type="match status" value="1"/>
</dbReference>
<dbReference type="NCBIfam" id="TIGR03629">
    <property type="entry name" value="uS13_arch"/>
    <property type="match status" value="1"/>
</dbReference>
<dbReference type="PANTHER" id="PTHR10871">
    <property type="entry name" value="30S RIBOSOMAL PROTEIN S13/40S RIBOSOMAL PROTEIN S18"/>
    <property type="match status" value="1"/>
</dbReference>
<dbReference type="PANTHER" id="PTHR10871:SF3">
    <property type="entry name" value="SMALL RIBOSOMAL SUBUNIT PROTEIN US13"/>
    <property type="match status" value="1"/>
</dbReference>
<dbReference type="Pfam" id="PF00416">
    <property type="entry name" value="Ribosomal_S13"/>
    <property type="match status" value="1"/>
</dbReference>
<dbReference type="PIRSF" id="PIRSF002134">
    <property type="entry name" value="Ribosomal_S13"/>
    <property type="match status" value="1"/>
</dbReference>
<dbReference type="SUPFAM" id="SSF46946">
    <property type="entry name" value="S13-like H2TH domain"/>
    <property type="match status" value="1"/>
</dbReference>
<dbReference type="PROSITE" id="PS00646">
    <property type="entry name" value="RIBOSOMAL_S13_1"/>
    <property type="match status" value="1"/>
</dbReference>
<dbReference type="PROSITE" id="PS50159">
    <property type="entry name" value="RIBOSOMAL_S13_2"/>
    <property type="match status" value="1"/>
</dbReference>
<organism>
    <name type="scientific">Nanoarchaeum equitans (strain Kin4-M)</name>
    <dbReference type="NCBI Taxonomy" id="228908"/>
    <lineage>
        <taxon>Archaea</taxon>
        <taxon>Nanobdellota</taxon>
        <taxon>Candidatus Nanoarchaeia</taxon>
        <taxon>Nanoarchaeales</taxon>
        <taxon>Nanoarchaeaceae</taxon>
        <taxon>Nanoarchaeum</taxon>
    </lineage>
</organism>
<protein>
    <recommendedName>
        <fullName evidence="1">Small ribosomal subunit protein uS13</fullName>
    </recommendedName>
    <alternativeName>
        <fullName evidence="3">30S ribosomal protein S13</fullName>
    </alternativeName>
</protein>
<sequence>MAKKPYGEVTKDIVHIADVDLDGHKPIYVELRKVVGVNWMFAHAVCAALGIDKWRKIGSLSDEELEKLEDALRNPWKYGIPSWLYNRRRDPETGKDLHLVGNDYKITMEFDIKREMQINSWRGYRHREGLPVRGQRTRSHHRKGRTVGVIKKK</sequence>
<feature type="chain" id="PRO_0000306760" description="Small ribosomal subunit protein uS13">
    <location>
        <begin position="1"/>
        <end position="153"/>
    </location>
</feature>
<feature type="region of interest" description="Disordered" evidence="2">
    <location>
        <begin position="132"/>
        <end position="153"/>
    </location>
</feature>
<feature type="compositionally biased region" description="Basic residues" evidence="2">
    <location>
        <begin position="135"/>
        <end position="153"/>
    </location>
</feature>
<name>RS13_NANEQ</name>
<accession>Q74M95</accession>